<comment type="function">
    <text evidence="1">Cleaves the N-terminal amino acid of tripeptides.</text>
</comment>
<comment type="catalytic activity">
    <reaction evidence="1">
        <text>Release of the N-terminal residue from a tripeptide.</text>
        <dbReference type="EC" id="3.4.11.4"/>
    </reaction>
</comment>
<comment type="cofactor">
    <cofactor evidence="1">
        <name>Zn(2+)</name>
        <dbReference type="ChEBI" id="CHEBI:29105"/>
    </cofactor>
    <text evidence="1">Binds 2 Zn(2+) ions per subunit.</text>
</comment>
<comment type="subcellular location">
    <subcellularLocation>
        <location evidence="1">Cytoplasm</location>
    </subcellularLocation>
</comment>
<comment type="similarity">
    <text evidence="1">Belongs to the peptidase M20B family.</text>
</comment>
<organism>
    <name type="scientific">Streptococcus thermophilus (strain ATCC BAA-491 / LMD-9)</name>
    <dbReference type="NCBI Taxonomy" id="322159"/>
    <lineage>
        <taxon>Bacteria</taxon>
        <taxon>Bacillati</taxon>
        <taxon>Bacillota</taxon>
        <taxon>Bacilli</taxon>
        <taxon>Lactobacillales</taxon>
        <taxon>Streptococcaceae</taxon>
        <taxon>Streptococcus</taxon>
    </lineage>
</organism>
<keyword id="KW-0031">Aminopeptidase</keyword>
<keyword id="KW-0963">Cytoplasm</keyword>
<keyword id="KW-0378">Hydrolase</keyword>
<keyword id="KW-0479">Metal-binding</keyword>
<keyword id="KW-0482">Metalloprotease</keyword>
<keyword id="KW-0645">Protease</keyword>
<keyword id="KW-0862">Zinc</keyword>
<name>PEPT_STRTD</name>
<sequence>MAYDLLLERFLRYAKINTRSDENATRTPTTQSQVDFALNILKPELEELGLSNIHYLESNGYLVATLPANDDRLTRKIGFISHMDTADFNAEGVSPQVIESYDGGIIPLGTSGYNLDPADFPNLQNYIGQTLITTDGTTLLGADDKSGIAEIMTALAHLKANPEIKHCEIRVGFGPDEEIGIGADKFDVDDFDVDFAYTVDGGPLGELQYETFSAAGAELIFHGRNVHPGTAKGQMVNALQLAIDFHNQLPAEDRPELTDGYQGFNHLQTMTGTVEEANSSYIIRDFETESFENRKATFQEIADKMNQAYGQTRVDLVIKDQYYNMRQVIEKDMMPVELAKEVMEDLGIVPVIEPIRGGTDGSKISFKGIPTPNIFAGGENMHGRYEFVSLQTMEKAVDVILGIISKP</sequence>
<reference key="1">
    <citation type="journal article" date="2006" name="Proc. Natl. Acad. Sci. U.S.A.">
        <title>Comparative genomics of the lactic acid bacteria.</title>
        <authorList>
            <person name="Makarova K.S."/>
            <person name="Slesarev A."/>
            <person name="Wolf Y.I."/>
            <person name="Sorokin A."/>
            <person name="Mirkin B."/>
            <person name="Koonin E.V."/>
            <person name="Pavlov A."/>
            <person name="Pavlova N."/>
            <person name="Karamychev V."/>
            <person name="Polouchine N."/>
            <person name="Shakhova V."/>
            <person name="Grigoriev I."/>
            <person name="Lou Y."/>
            <person name="Rohksar D."/>
            <person name="Lucas S."/>
            <person name="Huang K."/>
            <person name="Goodstein D.M."/>
            <person name="Hawkins T."/>
            <person name="Plengvidhya V."/>
            <person name="Welker D."/>
            <person name="Hughes J."/>
            <person name="Goh Y."/>
            <person name="Benson A."/>
            <person name="Baldwin K."/>
            <person name="Lee J.-H."/>
            <person name="Diaz-Muniz I."/>
            <person name="Dosti B."/>
            <person name="Smeianov V."/>
            <person name="Wechter W."/>
            <person name="Barabote R."/>
            <person name="Lorca G."/>
            <person name="Altermann E."/>
            <person name="Barrangou R."/>
            <person name="Ganesan B."/>
            <person name="Xie Y."/>
            <person name="Rawsthorne H."/>
            <person name="Tamir D."/>
            <person name="Parker C."/>
            <person name="Breidt F."/>
            <person name="Broadbent J.R."/>
            <person name="Hutkins R."/>
            <person name="O'Sullivan D."/>
            <person name="Steele J."/>
            <person name="Unlu G."/>
            <person name="Saier M.H. Jr."/>
            <person name="Klaenhammer T."/>
            <person name="Richardson P."/>
            <person name="Kozyavkin S."/>
            <person name="Weimer B.C."/>
            <person name="Mills D.A."/>
        </authorList>
    </citation>
    <scope>NUCLEOTIDE SEQUENCE [LARGE SCALE GENOMIC DNA]</scope>
    <source>
        <strain>ATCC BAA-491 / LMD-9</strain>
    </source>
</reference>
<dbReference type="EC" id="3.4.11.4" evidence="1"/>
<dbReference type="EMBL" id="CP000419">
    <property type="protein sequence ID" value="ABJ66288.1"/>
    <property type="molecule type" value="Genomic_DNA"/>
</dbReference>
<dbReference type="RefSeq" id="WP_011681190.1">
    <property type="nucleotide sequence ID" value="NC_008532.1"/>
</dbReference>
<dbReference type="SMR" id="Q03KI4"/>
<dbReference type="MEROPS" id="M20.003"/>
<dbReference type="KEGG" id="ste:STER_1094"/>
<dbReference type="HOGENOM" id="CLU_053676_0_0_9"/>
<dbReference type="GO" id="GO:0005829">
    <property type="term" value="C:cytosol"/>
    <property type="evidence" value="ECO:0007669"/>
    <property type="project" value="TreeGrafter"/>
</dbReference>
<dbReference type="GO" id="GO:0008237">
    <property type="term" value="F:metallopeptidase activity"/>
    <property type="evidence" value="ECO:0007669"/>
    <property type="project" value="UniProtKB-KW"/>
</dbReference>
<dbReference type="GO" id="GO:0045148">
    <property type="term" value="F:tripeptide aminopeptidase activity"/>
    <property type="evidence" value="ECO:0007669"/>
    <property type="project" value="UniProtKB-UniRule"/>
</dbReference>
<dbReference type="GO" id="GO:0008270">
    <property type="term" value="F:zinc ion binding"/>
    <property type="evidence" value="ECO:0007669"/>
    <property type="project" value="UniProtKB-UniRule"/>
</dbReference>
<dbReference type="GO" id="GO:0043171">
    <property type="term" value="P:peptide catabolic process"/>
    <property type="evidence" value="ECO:0007669"/>
    <property type="project" value="UniProtKB-UniRule"/>
</dbReference>
<dbReference type="GO" id="GO:0006508">
    <property type="term" value="P:proteolysis"/>
    <property type="evidence" value="ECO:0007669"/>
    <property type="project" value="UniProtKB-UniRule"/>
</dbReference>
<dbReference type="CDD" id="cd03892">
    <property type="entry name" value="M20_peptT"/>
    <property type="match status" value="1"/>
</dbReference>
<dbReference type="FunFam" id="3.30.70.360:FF:000002">
    <property type="entry name" value="Peptidase T"/>
    <property type="match status" value="1"/>
</dbReference>
<dbReference type="Gene3D" id="3.30.70.360">
    <property type="match status" value="1"/>
</dbReference>
<dbReference type="Gene3D" id="3.40.630.10">
    <property type="entry name" value="Zn peptidases"/>
    <property type="match status" value="1"/>
</dbReference>
<dbReference type="HAMAP" id="MF_00550">
    <property type="entry name" value="Aminopeptidase_M20"/>
    <property type="match status" value="1"/>
</dbReference>
<dbReference type="InterPro" id="IPR001261">
    <property type="entry name" value="ArgE/DapE_CS"/>
</dbReference>
<dbReference type="InterPro" id="IPR036264">
    <property type="entry name" value="Bact_exopeptidase_dim_dom"/>
</dbReference>
<dbReference type="InterPro" id="IPR002933">
    <property type="entry name" value="Peptidase_M20"/>
</dbReference>
<dbReference type="InterPro" id="IPR011650">
    <property type="entry name" value="Peptidase_M20_dimer"/>
</dbReference>
<dbReference type="InterPro" id="IPR010161">
    <property type="entry name" value="Peptidase_M20B"/>
</dbReference>
<dbReference type="NCBIfam" id="TIGR01882">
    <property type="entry name" value="peptidase-T"/>
    <property type="match status" value="1"/>
</dbReference>
<dbReference type="NCBIfam" id="NF003976">
    <property type="entry name" value="PRK05469.1"/>
    <property type="match status" value="1"/>
</dbReference>
<dbReference type="NCBIfam" id="NF009920">
    <property type="entry name" value="PRK13381.1"/>
    <property type="match status" value="1"/>
</dbReference>
<dbReference type="PANTHER" id="PTHR42994">
    <property type="entry name" value="PEPTIDASE T"/>
    <property type="match status" value="1"/>
</dbReference>
<dbReference type="PANTHER" id="PTHR42994:SF1">
    <property type="entry name" value="PEPTIDASE T"/>
    <property type="match status" value="1"/>
</dbReference>
<dbReference type="Pfam" id="PF07687">
    <property type="entry name" value="M20_dimer"/>
    <property type="match status" value="1"/>
</dbReference>
<dbReference type="Pfam" id="PF01546">
    <property type="entry name" value="Peptidase_M20"/>
    <property type="match status" value="1"/>
</dbReference>
<dbReference type="PIRSF" id="PIRSF037215">
    <property type="entry name" value="Peptidase_M20B"/>
    <property type="match status" value="1"/>
</dbReference>
<dbReference type="SUPFAM" id="SSF55031">
    <property type="entry name" value="Bacterial exopeptidase dimerisation domain"/>
    <property type="match status" value="1"/>
</dbReference>
<dbReference type="SUPFAM" id="SSF53187">
    <property type="entry name" value="Zn-dependent exopeptidases"/>
    <property type="match status" value="1"/>
</dbReference>
<dbReference type="PROSITE" id="PS00758">
    <property type="entry name" value="ARGE_DAPE_CPG2_1"/>
    <property type="match status" value="1"/>
</dbReference>
<dbReference type="PROSITE" id="PS00759">
    <property type="entry name" value="ARGE_DAPE_CPG2_2"/>
    <property type="match status" value="1"/>
</dbReference>
<evidence type="ECO:0000255" key="1">
    <source>
        <dbReference type="HAMAP-Rule" id="MF_00550"/>
    </source>
</evidence>
<accession>Q03KI4</accession>
<feature type="chain" id="PRO_1000017856" description="Peptidase T">
    <location>
        <begin position="1"/>
        <end position="407"/>
    </location>
</feature>
<feature type="active site" evidence="1">
    <location>
        <position position="84"/>
    </location>
</feature>
<feature type="active site" description="Proton acceptor" evidence="1">
    <location>
        <position position="177"/>
    </location>
</feature>
<feature type="binding site" evidence="1">
    <location>
        <position position="82"/>
    </location>
    <ligand>
        <name>Zn(2+)</name>
        <dbReference type="ChEBI" id="CHEBI:29105"/>
        <label>1</label>
    </ligand>
</feature>
<feature type="binding site" evidence="1">
    <location>
        <position position="143"/>
    </location>
    <ligand>
        <name>Zn(2+)</name>
        <dbReference type="ChEBI" id="CHEBI:29105"/>
        <label>1</label>
    </ligand>
</feature>
<feature type="binding site" evidence="1">
    <location>
        <position position="143"/>
    </location>
    <ligand>
        <name>Zn(2+)</name>
        <dbReference type="ChEBI" id="CHEBI:29105"/>
        <label>2</label>
    </ligand>
</feature>
<feature type="binding site" evidence="1">
    <location>
        <position position="178"/>
    </location>
    <ligand>
        <name>Zn(2+)</name>
        <dbReference type="ChEBI" id="CHEBI:29105"/>
        <label>2</label>
    </ligand>
</feature>
<feature type="binding site" evidence="1">
    <location>
        <position position="200"/>
    </location>
    <ligand>
        <name>Zn(2+)</name>
        <dbReference type="ChEBI" id="CHEBI:29105"/>
        <label>1</label>
    </ligand>
</feature>
<feature type="binding site" evidence="1">
    <location>
        <position position="382"/>
    </location>
    <ligand>
        <name>Zn(2+)</name>
        <dbReference type="ChEBI" id="CHEBI:29105"/>
        <label>2</label>
    </ligand>
</feature>
<gene>
    <name evidence="1" type="primary">pepT</name>
    <name type="ordered locus">STER_1094</name>
</gene>
<proteinExistence type="inferred from homology"/>
<protein>
    <recommendedName>
        <fullName evidence="1">Peptidase T</fullName>
        <ecNumber evidence="1">3.4.11.4</ecNumber>
    </recommendedName>
    <alternativeName>
        <fullName evidence="1">Aminotripeptidase</fullName>
        <shortName evidence="1">Tripeptidase</shortName>
    </alternativeName>
    <alternativeName>
        <fullName evidence="1">Tripeptide aminopeptidase</fullName>
    </alternativeName>
</protein>